<keyword id="KW-0028">Amino-acid biosynthesis</keyword>
<keyword id="KW-0057">Aromatic amino acid biosynthesis</keyword>
<keyword id="KW-0963">Cytoplasm</keyword>
<keyword id="KW-0808">Transferase</keyword>
<feature type="chain" id="PRO_1000012429" description="3-phosphoshikimate 1-carboxyvinyltransferase">
    <location>
        <begin position="1"/>
        <end position="440"/>
    </location>
</feature>
<feature type="active site" description="Proton acceptor" evidence="1">
    <location>
        <position position="316"/>
    </location>
</feature>
<feature type="binding site" evidence="1">
    <location>
        <position position="29"/>
    </location>
    <ligand>
        <name>3-phosphoshikimate</name>
        <dbReference type="ChEBI" id="CHEBI:145989"/>
    </ligand>
</feature>
<feature type="binding site" evidence="1">
    <location>
        <position position="29"/>
    </location>
    <ligand>
        <name>phosphoenolpyruvate</name>
        <dbReference type="ChEBI" id="CHEBI:58702"/>
    </ligand>
</feature>
<feature type="binding site" evidence="1">
    <location>
        <position position="34"/>
    </location>
    <ligand>
        <name>3-phosphoshikimate</name>
        <dbReference type="ChEBI" id="CHEBI:145989"/>
    </ligand>
</feature>
<feature type="binding site" evidence="1">
    <location>
        <position position="99"/>
    </location>
    <ligand>
        <name>phosphoenolpyruvate</name>
        <dbReference type="ChEBI" id="CHEBI:58702"/>
    </ligand>
</feature>
<feature type="binding site" evidence="1">
    <location>
        <position position="128"/>
    </location>
    <ligand>
        <name>phosphoenolpyruvate</name>
        <dbReference type="ChEBI" id="CHEBI:58702"/>
    </ligand>
</feature>
<feature type="binding site" evidence="1">
    <location>
        <position position="171"/>
    </location>
    <ligand>
        <name>3-phosphoshikimate</name>
        <dbReference type="ChEBI" id="CHEBI:145989"/>
    </ligand>
</feature>
<feature type="binding site" evidence="1">
    <location>
        <position position="172"/>
    </location>
    <ligand>
        <name>3-phosphoshikimate</name>
        <dbReference type="ChEBI" id="CHEBI:145989"/>
    </ligand>
</feature>
<feature type="binding site" evidence="1">
    <location>
        <position position="173"/>
    </location>
    <ligand>
        <name>3-phosphoshikimate</name>
        <dbReference type="ChEBI" id="CHEBI:145989"/>
    </ligand>
</feature>
<feature type="binding site" evidence="1">
    <location>
        <position position="173"/>
    </location>
    <ligand>
        <name>phosphoenolpyruvate</name>
        <dbReference type="ChEBI" id="CHEBI:58702"/>
    </ligand>
</feature>
<feature type="binding site" evidence="1">
    <location>
        <position position="199"/>
    </location>
    <ligand>
        <name>3-phosphoshikimate</name>
        <dbReference type="ChEBI" id="CHEBI:145989"/>
    </ligand>
</feature>
<feature type="binding site" evidence="1">
    <location>
        <position position="316"/>
    </location>
    <ligand>
        <name>3-phosphoshikimate</name>
        <dbReference type="ChEBI" id="CHEBI:145989"/>
    </ligand>
</feature>
<feature type="binding site" evidence="1">
    <location>
        <position position="343"/>
    </location>
    <ligand>
        <name>3-phosphoshikimate</name>
        <dbReference type="ChEBI" id="CHEBI:145989"/>
    </ligand>
</feature>
<feature type="binding site" evidence="1">
    <location>
        <position position="347"/>
    </location>
    <ligand>
        <name>phosphoenolpyruvate</name>
        <dbReference type="ChEBI" id="CHEBI:58702"/>
    </ligand>
</feature>
<feature type="binding site" evidence="1">
    <location>
        <position position="390"/>
    </location>
    <ligand>
        <name>phosphoenolpyruvate</name>
        <dbReference type="ChEBI" id="CHEBI:58702"/>
    </ligand>
</feature>
<feature type="binding site" evidence="1">
    <location>
        <position position="416"/>
    </location>
    <ligand>
        <name>phosphoenolpyruvate</name>
        <dbReference type="ChEBI" id="CHEBI:58702"/>
    </ligand>
</feature>
<name>AROA_DEIGD</name>
<protein>
    <recommendedName>
        <fullName evidence="1">3-phosphoshikimate 1-carboxyvinyltransferase</fullName>
        <ecNumber evidence="1">2.5.1.19</ecNumber>
    </recommendedName>
    <alternativeName>
        <fullName evidence="1">5-enolpyruvylshikimate-3-phosphate synthase</fullName>
        <shortName evidence="1">EPSP synthase</shortName>
        <shortName evidence="1">EPSPS</shortName>
    </alternativeName>
</protein>
<reference key="1">
    <citation type="submission" date="2006-04" db="EMBL/GenBank/DDBJ databases">
        <title>Complete sequence of chromosome of Deinococcus geothermalis DSM 11300.</title>
        <authorList>
            <person name="Copeland A."/>
            <person name="Lucas S."/>
            <person name="Lapidus A."/>
            <person name="Barry K."/>
            <person name="Detter J.C."/>
            <person name="Glavina del Rio T."/>
            <person name="Hammon N."/>
            <person name="Israni S."/>
            <person name="Dalin E."/>
            <person name="Tice H."/>
            <person name="Pitluck S."/>
            <person name="Brettin T."/>
            <person name="Bruce D."/>
            <person name="Han C."/>
            <person name="Tapia R."/>
            <person name="Saunders E."/>
            <person name="Gilna P."/>
            <person name="Schmutz J."/>
            <person name="Larimer F."/>
            <person name="Land M."/>
            <person name="Hauser L."/>
            <person name="Kyrpides N."/>
            <person name="Kim E."/>
            <person name="Daly M.J."/>
            <person name="Fredrickson J.K."/>
            <person name="Makarova K.S."/>
            <person name="Gaidamakova E.K."/>
            <person name="Zhai M."/>
            <person name="Richardson P."/>
        </authorList>
    </citation>
    <scope>NUCLEOTIDE SEQUENCE [LARGE SCALE GENOMIC DNA]</scope>
    <source>
        <strain>DSM 11300 / CIP 105573 / AG-3a</strain>
    </source>
</reference>
<dbReference type="EC" id="2.5.1.19" evidence="1"/>
<dbReference type="EMBL" id="CP000359">
    <property type="protein sequence ID" value="ABF45301.1"/>
    <property type="molecule type" value="Genomic_DNA"/>
</dbReference>
<dbReference type="RefSeq" id="WP_011530138.1">
    <property type="nucleotide sequence ID" value="NC_008025.1"/>
</dbReference>
<dbReference type="SMR" id="Q1IZN3"/>
<dbReference type="STRING" id="319795.Dgeo_1001"/>
<dbReference type="KEGG" id="dge:Dgeo_1001"/>
<dbReference type="eggNOG" id="COG0128">
    <property type="taxonomic scope" value="Bacteria"/>
</dbReference>
<dbReference type="HOGENOM" id="CLU_024321_0_0_0"/>
<dbReference type="UniPathway" id="UPA00053">
    <property type="reaction ID" value="UER00089"/>
</dbReference>
<dbReference type="Proteomes" id="UP000002431">
    <property type="component" value="Chromosome"/>
</dbReference>
<dbReference type="GO" id="GO:0005737">
    <property type="term" value="C:cytoplasm"/>
    <property type="evidence" value="ECO:0007669"/>
    <property type="project" value="UniProtKB-SubCell"/>
</dbReference>
<dbReference type="GO" id="GO:0003866">
    <property type="term" value="F:3-phosphoshikimate 1-carboxyvinyltransferase activity"/>
    <property type="evidence" value="ECO:0007669"/>
    <property type="project" value="UniProtKB-UniRule"/>
</dbReference>
<dbReference type="GO" id="GO:0008652">
    <property type="term" value="P:amino acid biosynthetic process"/>
    <property type="evidence" value="ECO:0007669"/>
    <property type="project" value="UniProtKB-KW"/>
</dbReference>
<dbReference type="GO" id="GO:0009073">
    <property type="term" value="P:aromatic amino acid family biosynthetic process"/>
    <property type="evidence" value="ECO:0007669"/>
    <property type="project" value="UniProtKB-KW"/>
</dbReference>
<dbReference type="GO" id="GO:0009423">
    <property type="term" value="P:chorismate biosynthetic process"/>
    <property type="evidence" value="ECO:0007669"/>
    <property type="project" value="UniProtKB-UniRule"/>
</dbReference>
<dbReference type="CDD" id="cd01556">
    <property type="entry name" value="EPSP_synthase"/>
    <property type="match status" value="1"/>
</dbReference>
<dbReference type="Gene3D" id="3.65.10.10">
    <property type="entry name" value="Enolpyruvate transferase domain"/>
    <property type="match status" value="2"/>
</dbReference>
<dbReference type="HAMAP" id="MF_00210">
    <property type="entry name" value="EPSP_synth"/>
    <property type="match status" value="1"/>
</dbReference>
<dbReference type="InterPro" id="IPR001986">
    <property type="entry name" value="Enolpyruvate_Tfrase_dom"/>
</dbReference>
<dbReference type="InterPro" id="IPR036968">
    <property type="entry name" value="Enolpyruvate_Tfrase_sf"/>
</dbReference>
<dbReference type="InterPro" id="IPR006264">
    <property type="entry name" value="EPSP_synthase"/>
</dbReference>
<dbReference type="InterPro" id="IPR023193">
    <property type="entry name" value="EPSP_synthase_CS"/>
</dbReference>
<dbReference type="InterPro" id="IPR013792">
    <property type="entry name" value="RNA3'P_cycl/enolpyr_Trfase_a/b"/>
</dbReference>
<dbReference type="NCBIfam" id="TIGR01356">
    <property type="entry name" value="aroA"/>
    <property type="match status" value="1"/>
</dbReference>
<dbReference type="PANTHER" id="PTHR21090">
    <property type="entry name" value="AROM/DEHYDROQUINATE SYNTHASE"/>
    <property type="match status" value="1"/>
</dbReference>
<dbReference type="PANTHER" id="PTHR21090:SF5">
    <property type="entry name" value="PENTAFUNCTIONAL AROM POLYPEPTIDE"/>
    <property type="match status" value="1"/>
</dbReference>
<dbReference type="Pfam" id="PF00275">
    <property type="entry name" value="EPSP_synthase"/>
    <property type="match status" value="1"/>
</dbReference>
<dbReference type="PIRSF" id="PIRSF000505">
    <property type="entry name" value="EPSPS"/>
    <property type="match status" value="1"/>
</dbReference>
<dbReference type="SUPFAM" id="SSF55205">
    <property type="entry name" value="EPT/RTPC-like"/>
    <property type="match status" value="1"/>
</dbReference>
<dbReference type="PROSITE" id="PS00104">
    <property type="entry name" value="EPSP_SYNTHASE_1"/>
    <property type="match status" value="1"/>
</dbReference>
<dbReference type="PROSITE" id="PS00885">
    <property type="entry name" value="EPSP_SYNTHASE_2"/>
    <property type="match status" value="1"/>
</dbReference>
<organism>
    <name type="scientific">Deinococcus geothermalis (strain DSM 11300 / CIP 105573 / AG-3a)</name>
    <dbReference type="NCBI Taxonomy" id="319795"/>
    <lineage>
        <taxon>Bacteria</taxon>
        <taxon>Thermotogati</taxon>
        <taxon>Deinococcota</taxon>
        <taxon>Deinococci</taxon>
        <taxon>Deinococcales</taxon>
        <taxon>Deinococcaceae</taxon>
        <taxon>Deinococcus</taxon>
    </lineage>
</organism>
<gene>
    <name evidence="1" type="primary">aroA</name>
    <name type="ordered locus">Dgeo_1001</name>
</gene>
<accession>Q1IZN3</accession>
<evidence type="ECO:0000255" key="1">
    <source>
        <dbReference type="HAMAP-Rule" id="MF_00210"/>
    </source>
</evidence>
<sequence>MTDGLPERFDVLVHPVSELRGELRAQPSKNYTTRYLLAAALAEGETRVVGAATSEDAEALIRCLRAWGADVDRVGEDVVVRGFGAHPRAGMTLNPGNAGAVARFLMGVAALTTDTTFVTDYSESLGRRPQGDLLAALERLGARVSSRNGQLPVTLSGPVRGGRVEVSAQRSSQYASALMFLGPLLPDGLDLRLTGEIKSHAPLRQTLDTLAAFGLQARASADLTRITIPGGQAYRPGRVLVPGDYPGSAALLVAAALLPGEVTVTNLREGDLQGEREALNVLRAMGADLVREGDRVTVRGGRPLHAVTRDGDSFTDAVQALTAAAAFARGTTTWENVATLRLKECDRISDTRRELERLGLTATETADSLSITGADRIPGDLTADGHGDHRMIMLLTLLGLRAEAPLRITGAHHIRKSYPLFFRHLEELGAHFEYLPTDAA</sequence>
<proteinExistence type="inferred from homology"/>
<comment type="function">
    <text evidence="1">Catalyzes the transfer of the enolpyruvyl moiety of phosphoenolpyruvate (PEP) to the 5-hydroxyl of shikimate-3-phosphate (S3P) to produce enolpyruvyl shikimate-3-phosphate and inorganic phosphate.</text>
</comment>
<comment type="catalytic activity">
    <reaction evidence="1">
        <text>3-phosphoshikimate + phosphoenolpyruvate = 5-O-(1-carboxyvinyl)-3-phosphoshikimate + phosphate</text>
        <dbReference type="Rhea" id="RHEA:21256"/>
        <dbReference type="ChEBI" id="CHEBI:43474"/>
        <dbReference type="ChEBI" id="CHEBI:57701"/>
        <dbReference type="ChEBI" id="CHEBI:58702"/>
        <dbReference type="ChEBI" id="CHEBI:145989"/>
        <dbReference type="EC" id="2.5.1.19"/>
    </reaction>
    <physiologicalReaction direction="left-to-right" evidence="1">
        <dbReference type="Rhea" id="RHEA:21257"/>
    </physiologicalReaction>
</comment>
<comment type="pathway">
    <text evidence="1">Metabolic intermediate biosynthesis; chorismate biosynthesis; chorismate from D-erythrose 4-phosphate and phosphoenolpyruvate: step 6/7.</text>
</comment>
<comment type="subunit">
    <text evidence="1">Monomer.</text>
</comment>
<comment type="subcellular location">
    <subcellularLocation>
        <location evidence="1">Cytoplasm</location>
    </subcellularLocation>
</comment>
<comment type="similarity">
    <text evidence="1">Belongs to the EPSP synthase family.</text>
</comment>